<comment type="function">
    <text>May activate the peptidyl carrier protein (PCP) domains of fengycin synthase by transferring the 4'-phosphopantetheinyl moiety of coenzyme A (CoA) to a serine residue.</text>
</comment>
<comment type="catalytic activity">
    <reaction>
        <text>apo-[peptidyl-carrier protein] + CoA = holo-[peptidyl-carrier protein] + adenosine 3',5'-bisphosphate + H(+)</text>
        <dbReference type="Rhea" id="RHEA:46228"/>
        <dbReference type="Rhea" id="RHEA-COMP:11479"/>
        <dbReference type="Rhea" id="RHEA-COMP:11480"/>
        <dbReference type="ChEBI" id="CHEBI:15378"/>
        <dbReference type="ChEBI" id="CHEBI:29999"/>
        <dbReference type="ChEBI" id="CHEBI:57287"/>
        <dbReference type="ChEBI" id="CHEBI:58343"/>
        <dbReference type="ChEBI" id="CHEBI:64479"/>
    </reaction>
</comment>
<comment type="cofactor">
    <cofactor evidence="1">
        <name>Mg(2+)</name>
        <dbReference type="ChEBI" id="CHEBI:18420"/>
    </cofactor>
</comment>
<comment type="similarity">
    <text evidence="2">Belongs to the P-Pant transferase superfamily. Gsp/Sfp/HetI/AcpT family.</text>
</comment>
<protein>
    <recommendedName>
        <fullName>4'-phosphopantetheinyl transferase ffp</fullName>
        <ecNumber>2.7.8.-</ecNumber>
    </recommendedName>
    <alternativeName>
        <fullName>Fengycin synthase-activating enzyme</fullName>
    </alternativeName>
</protein>
<sequence>MKIYGIYMDRPLSQEETDRLMSFVSAEKREKCRRFYHKEDAHRTLLGDVLVRSVISEQYQLNKADIRFSAQEYGKPCIPDLPNAHFNISHSGHWVIGAFDSDPIGVDIEKMKPISLGIAERFFSKNEYSDLLSKHKDEQNDYFYHLWSMKESFIKQEGKGLSLPLDSFSVRLHEDGRVSVELPEHHTPCFIKTYEVDPGYKMAVCAARPDFPEDITMISYEALL</sequence>
<gene>
    <name type="primary">ffp</name>
    <name type="synonym">sfp</name>
</gene>
<feature type="chain" id="PRO_0000206078" description="4'-phosphopantetheinyl transferase ffp">
    <location>
        <begin position="1"/>
        <end position="224"/>
    </location>
</feature>
<feature type="region of interest" description="Peptidyl carrier protein binding" evidence="1">
    <location>
        <begin position="158"/>
        <end position="189"/>
    </location>
</feature>
<feature type="binding site" evidence="1">
    <location>
        <position position="107"/>
    </location>
    <ligand>
        <name>Mg(2+)</name>
        <dbReference type="ChEBI" id="CHEBI:18420"/>
    </ligand>
</feature>
<feature type="binding site" evidence="1">
    <location>
        <position position="109"/>
    </location>
    <ligand>
        <name>Mg(2+)</name>
        <dbReference type="ChEBI" id="CHEBI:18420"/>
    </ligand>
</feature>
<feature type="binding site" evidence="1">
    <location>
        <position position="151"/>
    </location>
    <ligand>
        <name>Mg(2+)</name>
        <dbReference type="ChEBI" id="CHEBI:18420"/>
    </ligand>
</feature>
<reference key="1">
    <citation type="submission" date="2000-10" db="EMBL/GenBank/DDBJ databases">
        <title>sfp is required for fengycin synthesis.</title>
        <authorList>
            <person name="Shu H.-Y."/>
            <person name="Liu S.-T."/>
        </authorList>
    </citation>
    <scope>NUCLEOTIDE SEQUENCE [GENOMIC DNA]</scope>
    <source>
        <strain>F29-3</strain>
    </source>
</reference>
<accession>Q9F4F7</accession>
<keyword id="KW-0045">Antibiotic biosynthesis</keyword>
<keyword id="KW-0460">Magnesium</keyword>
<keyword id="KW-0479">Metal-binding</keyword>
<keyword id="KW-0808">Transferase</keyword>
<evidence type="ECO:0000250" key="1"/>
<evidence type="ECO:0000305" key="2"/>
<proteinExistence type="inferred from homology"/>
<dbReference type="EC" id="2.7.8.-"/>
<dbReference type="EMBL" id="AY009114">
    <property type="protein sequence ID" value="AAG24257.1"/>
    <property type="molecule type" value="Genomic_DNA"/>
</dbReference>
<dbReference type="SMR" id="Q9F4F7"/>
<dbReference type="STRING" id="483913.AN935_01845"/>
<dbReference type="ChEMBL" id="CHEMBL1293248"/>
<dbReference type="GO" id="GO:0005829">
    <property type="term" value="C:cytosol"/>
    <property type="evidence" value="ECO:0007669"/>
    <property type="project" value="TreeGrafter"/>
</dbReference>
<dbReference type="GO" id="GO:0008897">
    <property type="term" value="F:holo-[acyl-carrier-protein] synthase activity"/>
    <property type="evidence" value="ECO:0007669"/>
    <property type="project" value="InterPro"/>
</dbReference>
<dbReference type="GO" id="GO:0000287">
    <property type="term" value="F:magnesium ion binding"/>
    <property type="evidence" value="ECO:0007669"/>
    <property type="project" value="InterPro"/>
</dbReference>
<dbReference type="GO" id="GO:0017000">
    <property type="term" value="P:antibiotic biosynthetic process"/>
    <property type="evidence" value="ECO:0007669"/>
    <property type="project" value="UniProtKB-KW"/>
</dbReference>
<dbReference type="GO" id="GO:0006633">
    <property type="term" value="P:fatty acid biosynthetic process"/>
    <property type="evidence" value="ECO:0007669"/>
    <property type="project" value="InterPro"/>
</dbReference>
<dbReference type="GO" id="GO:0019878">
    <property type="term" value="P:lysine biosynthetic process via aminoadipic acid"/>
    <property type="evidence" value="ECO:0007669"/>
    <property type="project" value="TreeGrafter"/>
</dbReference>
<dbReference type="Gene3D" id="3.90.470.20">
    <property type="entry name" value="4'-phosphopantetheinyl transferase domain"/>
    <property type="match status" value="2"/>
</dbReference>
<dbReference type="InterPro" id="IPR008278">
    <property type="entry name" value="4-PPantetheinyl_Trfase_dom"/>
</dbReference>
<dbReference type="InterPro" id="IPR037143">
    <property type="entry name" value="4-PPantetheinyl_Trfase_dom_sf"/>
</dbReference>
<dbReference type="InterPro" id="IPR055066">
    <property type="entry name" value="AASDHPPT_N"/>
</dbReference>
<dbReference type="InterPro" id="IPR050559">
    <property type="entry name" value="P-Pant_transferase_sf"/>
</dbReference>
<dbReference type="InterPro" id="IPR004568">
    <property type="entry name" value="Ppantetheine-prot_Trfase_dom"/>
</dbReference>
<dbReference type="NCBIfam" id="TIGR00556">
    <property type="entry name" value="pantethn_trn"/>
    <property type="match status" value="1"/>
</dbReference>
<dbReference type="PANTHER" id="PTHR12215:SF10">
    <property type="entry name" value="L-AMINOADIPATE-SEMIALDEHYDE DEHYDROGENASE-PHOSPHOPANTETHEINYL TRANSFERASE"/>
    <property type="match status" value="1"/>
</dbReference>
<dbReference type="PANTHER" id="PTHR12215">
    <property type="entry name" value="PHOSPHOPANTETHEINE TRANSFERASE"/>
    <property type="match status" value="1"/>
</dbReference>
<dbReference type="Pfam" id="PF22624">
    <property type="entry name" value="AASDHPPT_N"/>
    <property type="match status" value="1"/>
</dbReference>
<dbReference type="Pfam" id="PF01648">
    <property type="entry name" value="ACPS"/>
    <property type="match status" value="1"/>
</dbReference>
<dbReference type="SUPFAM" id="SSF56214">
    <property type="entry name" value="4'-phosphopantetheinyl transferase"/>
    <property type="match status" value="2"/>
</dbReference>
<organism>
    <name type="scientific">Bacillus subtilis</name>
    <dbReference type="NCBI Taxonomy" id="1423"/>
    <lineage>
        <taxon>Bacteria</taxon>
        <taxon>Bacillati</taxon>
        <taxon>Bacillota</taxon>
        <taxon>Bacilli</taxon>
        <taxon>Bacillales</taxon>
        <taxon>Bacillaceae</taxon>
        <taxon>Bacillus</taxon>
    </lineage>
</organism>
<name>FFP_BACIU</name>